<name>MRS2_MOUSE</name>
<organism>
    <name type="scientific">Mus musculus</name>
    <name type="common">Mouse</name>
    <dbReference type="NCBI Taxonomy" id="10090"/>
    <lineage>
        <taxon>Eukaryota</taxon>
        <taxon>Metazoa</taxon>
        <taxon>Chordata</taxon>
        <taxon>Craniata</taxon>
        <taxon>Vertebrata</taxon>
        <taxon>Euteleostomi</taxon>
        <taxon>Mammalia</taxon>
        <taxon>Eutheria</taxon>
        <taxon>Euarchontoglires</taxon>
        <taxon>Glires</taxon>
        <taxon>Rodentia</taxon>
        <taxon>Myomorpha</taxon>
        <taxon>Muroidea</taxon>
        <taxon>Muridae</taxon>
        <taxon>Murinae</taxon>
        <taxon>Mus</taxon>
        <taxon>Mus</taxon>
    </lineage>
</organism>
<feature type="transit peptide" description="Mitochondrion" evidence="2">
    <location>
        <begin position="1"/>
        <end position="53"/>
    </location>
</feature>
<feature type="chain" id="PRO_0000042839" description="Magnesium transporter MRS2 homolog, mitochondrial">
    <location>
        <begin position="54"/>
        <end position="434"/>
    </location>
</feature>
<feature type="topological domain" description="Mitochondrial matrix" evidence="1">
    <location>
        <begin position="54"/>
        <end position="330"/>
    </location>
</feature>
<feature type="transmembrane region" description="Helical; Name=1" evidence="1">
    <location>
        <begin position="331"/>
        <end position="350"/>
    </location>
</feature>
<feature type="topological domain" description="Mitochondrial intermembrane" evidence="1">
    <location>
        <begin position="351"/>
        <end position="361"/>
    </location>
</feature>
<feature type="transmembrane region" description="Helical; Name=2" evidence="1">
    <location>
        <begin position="362"/>
        <end position="392"/>
    </location>
</feature>
<feature type="topological domain" description="Mitochondrial matrix" evidence="1">
    <location>
        <begin position="393"/>
        <end position="434"/>
    </location>
</feature>
<feature type="short sequence motif" description="GMN motif" evidence="1">
    <location>
        <begin position="351"/>
        <end position="353"/>
    </location>
</feature>
<feature type="binding site" evidence="1">
    <location>
        <position position="234"/>
    </location>
    <ligand>
        <name>Mg(2+)</name>
        <dbReference type="ChEBI" id="CHEBI:18420"/>
        <label>1</label>
    </ligand>
</feature>
<feature type="binding site" evidence="1">
    <location>
        <position position="237"/>
    </location>
    <ligand>
        <name>Mg(2+)</name>
        <dbReference type="ChEBI" id="CHEBI:18420"/>
        <label>1</label>
    </ligand>
</feature>
<feature type="binding site" evidence="1">
    <location>
        <position position="238"/>
    </location>
    <ligand>
        <name>Mg(2+)</name>
        <dbReference type="ChEBI" id="CHEBI:18420"/>
        <label>1</label>
    </ligand>
</feature>
<feature type="binding site" evidence="1">
    <location>
        <position position="303"/>
    </location>
    <ligand>
        <name>Mg(2+)</name>
        <dbReference type="ChEBI" id="CHEBI:18420"/>
        <label>1</label>
    </ligand>
</feature>
<feature type="binding site" evidence="1">
    <location>
        <position position="320"/>
    </location>
    <ligand>
        <name>Mg(2+)</name>
        <dbReference type="ChEBI" id="CHEBI:18420"/>
        <label>2</label>
    </ligand>
</feature>
<feature type="binding site" evidence="1">
    <location>
        <position position="351"/>
    </location>
    <ligand>
        <name>Mg(2+)</name>
        <dbReference type="ChEBI" id="CHEBI:18420"/>
        <label>3</label>
    </ligand>
</feature>
<feature type="binding site" evidence="1">
    <location>
        <position position="353"/>
    </location>
    <ligand>
        <name>Mg(2+)</name>
        <dbReference type="ChEBI" id="CHEBI:18420"/>
        <label>3</label>
    </ligand>
</feature>
<accession>Q5NCE8</accession>
<reference key="1">
    <citation type="journal article" date="2009" name="PLoS Biol.">
        <title>Lineage-specific biology revealed by a finished genome assembly of the mouse.</title>
        <authorList>
            <person name="Church D.M."/>
            <person name="Goodstadt L."/>
            <person name="Hillier L.W."/>
            <person name="Zody M.C."/>
            <person name="Goldstein S."/>
            <person name="She X."/>
            <person name="Bult C.J."/>
            <person name="Agarwala R."/>
            <person name="Cherry J.L."/>
            <person name="DiCuccio M."/>
            <person name="Hlavina W."/>
            <person name="Kapustin Y."/>
            <person name="Meric P."/>
            <person name="Maglott D."/>
            <person name="Birtle Z."/>
            <person name="Marques A.C."/>
            <person name="Graves T."/>
            <person name="Zhou S."/>
            <person name="Teague B."/>
            <person name="Potamousis K."/>
            <person name="Churas C."/>
            <person name="Place M."/>
            <person name="Herschleb J."/>
            <person name="Runnheim R."/>
            <person name="Forrest D."/>
            <person name="Amos-Landgraf J."/>
            <person name="Schwartz D.C."/>
            <person name="Cheng Z."/>
            <person name="Lindblad-Toh K."/>
            <person name="Eichler E.E."/>
            <person name="Ponting C.P."/>
        </authorList>
    </citation>
    <scope>NUCLEOTIDE SEQUENCE [LARGE SCALE GENOMIC DNA]</scope>
    <source>
        <strain>C57BL/6J</strain>
    </source>
</reference>
<reference key="2">
    <citation type="journal article" date="2001" name="Genomics">
        <title>The human mitochondrial Mrs2 protein functionally substitutes for its yeast homologue, a candidate magnesium transporter.</title>
        <authorList>
            <person name="Zsurka G."/>
            <person name="Gregan J."/>
            <person name="Schweyen R.J."/>
        </authorList>
    </citation>
    <scope>TISSUE SPECIFICITY</scope>
</reference>
<proteinExistence type="evidence at transcript level"/>
<sequence length="434" mass="49299">MECLRCLPGLLPRAAQPRRALWTAVARLSLAACGGRATPLRSRSPKASSTARAAGDVLRFRTSDASQATLASVAQVFAVTKFDKEGNVTSFERKKTELYHELALQARDLRFQHVMSITTRNNRIIMRMEYLKAVITPECLLILDYRNLNLEHWLFRELPSQLAGEGQLVTYPLPFEFRAIEALLQYWISTLRGRLSVLQPLILETLDALVDPKHSSVDRSKLHVLLQNGKSLSELETDIKIFKESILELLDEEEMLEELCLTKWSDPHVFEKSSTGIDHAEEMELLLENYYRLAEDLSNEARELRVLIDDSQSIIFINLDSHRNVMMRLNLQLTMGTFSLSLFGLMGVAFGMNLESSLEEDHRVFWLVTGIMFMGSGLIWRRLLSFLGRQLEAPVPPVMTSLPKKTLLANRRMDVKNSLRPEGLGASRTILASR</sequence>
<dbReference type="EMBL" id="AL645533">
    <property type="protein sequence ID" value="CAI35077.1"/>
    <property type="status" value="ALT_INIT"/>
    <property type="molecule type" value="Genomic_DNA"/>
</dbReference>
<dbReference type="CCDS" id="CCDS26385.2"/>
<dbReference type="RefSeq" id="NP_001013407.2">
    <property type="nucleotide sequence ID" value="NM_001013389.2"/>
</dbReference>
<dbReference type="SMR" id="Q5NCE8"/>
<dbReference type="BioGRID" id="237667">
    <property type="interactions" value="1"/>
</dbReference>
<dbReference type="FunCoup" id="Q5NCE8">
    <property type="interactions" value="1855"/>
</dbReference>
<dbReference type="STRING" id="10090.ENSMUSP00000021772"/>
<dbReference type="GlyGen" id="Q5NCE8">
    <property type="glycosylation" value="1 site, 1 O-linked glycan (1 site)"/>
</dbReference>
<dbReference type="PhosphoSitePlus" id="Q5NCE8"/>
<dbReference type="PaxDb" id="10090-ENSMUSP00000021772"/>
<dbReference type="PeptideAtlas" id="Q5NCE8"/>
<dbReference type="ProteomicsDB" id="295658"/>
<dbReference type="Pumba" id="Q5NCE8"/>
<dbReference type="Antibodypedia" id="25267">
    <property type="antibodies" value="56 antibodies from 13 providers"/>
</dbReference>
<dbReference type="DNASU" id="380836"/>
<dbReference type="Ensembl" id="ENSMUST00000021772.4">
    <property type="protein sequence ID" value="ENSMUSP00000021772.4"/>
    <property type="gene ID" value="ENSMUSG00000021339.5"/>
</dbReference>
<dbReference type="GeneID" id="380836"/>
<dbReference type="KEGG" id="mmu:380836"/>
<dbReference type="UCSC" id="uc056ytg.1">
    <property type="organism name" value="mouse"/>
</dbReference>
<dbReference type="AGR" id="MGI:2685748"/>
<dbReference type="CTD" id="57380"/>
<dbReference type="MGI" id="MGI:2685748">
    <property type="gene designation" value="Mrs2"/>
</dbReference>
<dbReference type="VEuPathDB" id="HostDB:ENSMUSG00000021339"/>
<dbReference type="eggNOG" id="KOG2662">
    <property type="taxonomic scope" value="Eukaryota"/>
</dbReference>
<dbReference type="GeneTree" id="ENSGT00390000009988"/>
<dbReference type="HOGENOM" id="CLU_047261_0_0_1"/>
<dbReference type="InParanoid" id="Q5NCE8"/>
<dbReference type="OMA" id="TRNNCII"/>
<dbReference type="OrthoDB" id="10251508at2759"/>
<dbReference type="PhylomeDB" id="Q5NCE8"/>
<dbReference type="TreeFam" id="TF328433"/>
<dbReference type="Reactome" id="R-MMU-5223345">
    <property type="pathway name" value="Miscellaneous transport and binding events"/>
</dbReference>
<dbReference type="BioGRID-ORCS" id="380836">
    <property type="hits" value="1 hit in 75 CRISPR screens"/>
</dbReference>
<dbReference type="ChiTaRS" id="Mrs2">
    <property type="organism name" value="mouse"/>
</dbReference>
<dbReference type="PRO" id="PR:Q5NCE8"/>
<dbReference type="Proteomes" id="UP000000589">
    <property type="component" value="Chromosome 13"/>
</dbReference>
<dbReference type="RNAct" id="Q5NCE8">
    <property type="molecule type" value="protein"/>
</dbReference>
<dbReference type="Bgee" id="ENSMUSG00000021339">
    <property type="expression patterns" value="Expressed in spermatocyte and 252 other cell types or tissues"/>
</dbReference>
<dbReference type="GO" id="GO:0005743">
    <property type="term" value="C:mitochondrial inner membrane"/>
    <property type="evidence" value="ECO:0007669"/>
    <property type="project" value="UniProtKB-SubCell"/>
</dbReference>
<dbReference type="GO" id="GO:0005739">
    <property type="term" value="C:mitochondrion"/>
    <property type="evidence" value="ECO:0007005"/>
    <property type="project" value="MGI"/>
</dbReference>
<dbReference type="GO" id="GO:0015095">
    <property type="term" value="F:magnesium ion transmembrane transporter activity"/>
    <property type="evidence" value="ECO:0000250"/>
    <property type="project" value="UniProtKB"/>
</dbReference>
<dbReference type="GO" id="GO:0006089">
    <property type="term" value="P:lactate metabolic process"/>
    <property type="evidence" value="ECO:0007669"/>
    <property type="project" value="Ensembl"/>
</dbReference>
<dbReference type="GO" id="GO:0045016">
    <property type="term" value="P:mitochondrial magnesium ion transmembrane transport"/>
    <property type="evidence" value="ECO:0000250"/>
    <property type="project" value="UniProtKB"/>
</dbReference>
<dbReference type="CDD" id="cd12823">
    <property type="entry name" value="Mrs2_Mfm1p-like"/>
    <property type="match status" value="1"/>
</dbReference>
<dbReference type="FunFam" id="1.20.58.340:FF:000007">
    <property type="entry name" value="Magnesium transporter MRS2 homolog, mitochondrial"/>
    <property type="match status" value="1"/>
</dbReference>
<dbReference type="FunFam" id="2.40.128.330:FF:000003">
    <property type="entry name" value="Magnesium transporter MRS2 homolog, mitochondrial"/>
    <property type="match status" value="1"/>
</dbReference>
<dbReference type="Gene3D" id="2.40.128.330">
    <property type="match status" value="1"/>
</dbReference>
<dbReference type="Gene3D" id="1.20.58.340">
    <property type="entry name" value="Magnesium transport protein CorA, transmembrane region"/>
    <property type="match status" value="1"/>
</dbReference>
<dbReference type="InterPro" id="IPR039204">
    <property type="entry name" value="MRS2-like"/>
</dbReference>
<dbReference type="PANTHER" id="PTHR13890:SF0">
    <property type="entry name" value="MAGNESIUM TRANSPORTER MRS2 HOMOLOG, MITOCHONDRIAL"/>
    <property type="match status" value="1"/>
</dbReference>
<dbReference type="PANTHER" id="PTHR13890">
    <property type="entry name" value="RNA SPLICING PROTEIN MRS2, MITOCHONDRIAL"/>
    <property type="match status" value="1"/>
</dbReference>
<dbReference type="Pfam" id="PF22099">
    <property type="entry name" value="MRS2-like"/>
    <property type="match status" value="1"/>
</dbReference>
<keyword id="KW-0406">Ion transport</keyword>
<keyword id="KW-0460">Magnesium</keyword>
<keyword id="KW-0472">Membrane</keyword>
<keyword id="KW-0479">Metal-binding</keyword>
<keyword id="KW-0496">Mitochondrion</keyword>
<keyword id="KW-0999">Mitochondrion inner membrane</keyword>
<keyword id="KW-1185">Reference proteome</keyword>
<keyword id="KW-0809">Transit peptide</keyword>
<keyword id="KW-0812">Transmembrane</keyword>
<keyword id="KW-1133">Transmembrane helix</keyword>
<keyword id="KW-0813">Transport</keyword>
<evidence type="ECO:0000250" key="1">
    <source>
        <dbReference type="UniProtKB" id="Q9HD23"/>
    </source>
</evidence>
<evidence type="ECO:0000255" key="2"/>
<evidence type="ECO:0000269" key="3">
    <source>
    </source>
</evidence>
<evidence type="ECO:0000305" key="4"/>
<comment type="function">
    <text evidence="1">Magnesium transporter that mediates the influx of magnesium into the mitochondrial matrix and regulates magnesium metabolism (By similarity). Also permeable to calcium, sodium and potassium ions (By similarity). Required for normal expression of the mitochondrial respiratory complex I subunits (By similarity). May play a role in maintaining the inner mitochondrial membrane potential (By similarity).</text>
</comment>
<comment type="activity regulation">
    <text evidence="1">May be regulated by calcium ions.</text>
</comment>
<comment type="subunit">
    <text evidence="1">Homopentamer.</text>
</comment>
<comment type="subcellular location">
    <subcellularLocation>
        <location evidence="1">Mitochondrion inner membrane</location>
        <topology evidence="1">Multi-pass membrane protein</topology>
    </subcellularLocation>
</comment>
<comment type="tissue specificity">
    <text evidence="3">Ubiquitously expressed.</text>
</comment>
<comment type="domain">
    <text evidence="1">The GMN motif acts as an ion selectivity filter.</text>
</comment>
<comment type="similarity">
    <text evidence="4">Belongs to the CorA metal ion transporter (MIT) (TC 1.A.35) family.</text>
</comment>
<comment type="sequence caution" evidence="4">
    <conflict type="erroneous initiation">
        <sequence resource="EMBL-CDS" id="CAI35077"/>
    </conflict>
</comment>
<gene>
    <name type="primary">Mrs2</name>
    <name type="synonym">Gm902</name>
    <name type="synonym">Mrs2l</name>
</gene>
<protein>
    <recommendedName>
        <fullName>Magnesium transporter MRS2 homolog, mitochondrial</fullName>
    </recommendedName>
    <alternativeName>
        <fullName>MRS2-like protein</fullName>
    </alternativeName>
</protein>